<sequence>MPIQLECLSHTPLHGYVDPAPEVVAEVERVQAAARDRVRAFDPELVVVFAPDHFNGFFYDVMPPFCIGAAATAIGDFKSLAGKLPVPADLALSLAESVMAADIDVALSHRMQVDHGCADALAALTGSLHRYPVIPVFINSVAPPMATLRRARLLGDAVGRFLSRAGKRVLVVGSGGISHEPPVPELAGASEEVAERLIAGRNPSPESAARQARTVAAAKSFVAGDSHLHPLNPEWDRAFLSLLASGELTAVDGMTNDAITRDGGKSAHEIRTWVAAFGALAAYGPYRASLDFYRAIPEWIAGFATMHAEPAAV</sequence>
<name>MHPB_CUPNE</name>
<keyword id="KW-0058">Aromatic hydrocarbons catabolism</keyword>
<keyword id="KW-0223">Dioxygenase</keyword>
<keyword id="KW-0408">Iron</keyword>
<keyword id="KW-0560">Oxidoreductase</keyword>
<gene>
    <name type="primary">mhpB</name>
    <name type="synonym">mcpI</name>
</gene>
<dbReference type="EC" id="1.13.11.16"/>
<dbReference type="EMBL" id="X52414">
    <property type="protein sequence ID" value="CAA36665.1"/>
    <property type="molecule type" value="Genomic_DNA"/>
</dbReference>
<dbReference type="PIR" id="S10154">
    <property type="entry name" value="S10154"/>
</dbReference>
<dbReference type="SMR" id="P17295"/>
<dbReference type="SwissLipids" id="SLP:000001890"/>
<dbReference type="SABIO-RK" id="P17295"/>
<dbReference type="UniPathway" id="UPA00714"/>
<dbReference type="GO" id="GO:0047070">
    <property type="term" value="F:3-carboxyethylcatechol 2,3-dioxygenase activity"/>
    <property type="evidence" value="ECO:0007669"/>
    <property type="project" value="UniProtKB-UniRule"/>
</dbReference>
<dbReference type="GO" id="GO:0008198">
    <property type="term" value="F:ferrous iron binding"/>
    <property type="evidence" value="ECO:0007669"/>
    <property type="project" value="InterPro"/>
</dbReference>
<dbReference type="GO" id="GO:0019380">
    <property type="term" value="P:3-phenylpropionate catabolic process"/>
    <property type="evidence" value="ECO:0007669"/>
    <property type="project" value="UniProtKB-UniRule"/>
</dbReference>
<dbReference type="CDD" id="cd07365">
    <property type="entry name" value="MhpB_like"/>
    <property type="match status" value="1"/>
</dbReference>
<dbReference type="Gene3D" id="3.40.830.10">
    <property type="entry name" value="LigB-like"/>
    <property type="match status" value="1"/>
</dbReference>
<dbReference type="HAMAP" id="MF_01653">
    <property type="entry name" value="MhpB"/>
    <property type="match status" value="1"/>
</dbReference>
<dbReference type="InterPro" id="IPR023789">
    <property type="entry name" value="DHPP/DHXA_dioxygenase"/>
</dbReference>
<dbReference type="InterPro" id="IPR004183">
    <property type="entry name" value="Xdiol_dOase_suB"/>
</dbReference>
<dbReference type="NCBIfam" id="NF009908">
    <property type="entry name" value="PRK13370.1-2"/>
    <property type="match status" value="1"/>
</dbReference>
<dbReference type="NCBIfam" id="NF009910">
    <property type="entry name" value="PRK13370.1-4"/>
    <property type="match status" value="1"/>
</dbReference>
<dbReference type="Pfam" id="PF02900">
    <property type="entry name" value="LigB"/>
    <property type="match status" value="1"/>
</dbReference>
<dbReference type="SUPFAM" id="SSF53213">
    <property type="entry name" value="LigB-like"/>
    <property type="match status" value="1"/>
</dbReference>
<accession>P17295</accession>
<feature type="chain" id="PRO_0000085102" description="2,3-dihydroxyphenylpropionate/2,3-dihydroxicinnamic acid 1,2-dioxygenase">
    <location>
        <begin position="1"/>
        <end position="313"/>
    </location>
</feature>
<feature type="active site" description="Proton donor" evidence="1">
    <location>
        <position position="115"/>
    </location>
</feature>
<feature type="active site" description="Proton acceptor" evidence="1">
    <location>
        <position position="179"/>
    </location>
</feature>
<evidence type="ECO:0000250" key="1"/>
<evidence type="ECO:0000269" key="2">
    <source>
    </source>
</evidence>
<evidence type="ECO:0000305" key="3"/>
<organism>
    <name type="scientific">Cupriavidus necator</name>
    <name type="common">Alcaligenes eutrophus</name>
    <name type="synonym">Ralstonia eutropha</name>
    <dbReference type="NCBI Taxonomy" id="106590"/>
    <lineage>
        <taxon>Bacteria</taxon>
        <taxon>Pseudomonadati</taxon>
        <taxon>Pseudomonadota</taxon>
        <taxon>Betaproteobacteria</taxon>
        <taxon>Burkholderiales</taxon>
        <taxon>Burkholderiaceae</taxon>
        <taxon>Cupriavidus</taxon>
    </lineage>
</organism>
<comment type="function">
    <text evidence="2">Catalyzes the non-heme iron(II)-dependent oxidative cleavage of 2,3-dihydroxyphenylpropionic acid and 2,3-dihydroxicinnamic acid into 2-hydroxy-6-ketononadienedioate and 2-hydroxy-6-ketononatrienedioate, respectively. Also catalyzes the cleavage of catechol.</text>
</comment>
<comment type="catalytic activity">
    <reaction>
        <text>3-(2,3-dihydroxyphenyl)propanoate + O2 = (2Z,4E)-2-hydroxy-6-oxonona-2,4-dienedioate + H(+)</text>
        <dbReference type="Rhea" id="RHEA:23840"/>
        <dbReference type="ChEBI" id="CHEBI:15378"/>
        <dbReference type="ChEBI" id="CHEBI:15379"/>
        <dbReference type="ChEBI" id="CHEBI:46951"/>
        <dbReference type="ChEBI" id="CHEBI:66887"/>
        <dbReference type="EC" id="1.13.11.16"/>
    </reaction>
</comment>
<comment type="catalytic activity">
    <reaction>
        <text>(2E)-3-(2,3-dihydroxyphenyl)prop-2-enoate + O2 = (2Z,4E,7E)-2-hydroxy-6-oxonona-2,4,7-trienedioate + H(+)</text>
        <dbReference type="Rhea" id="RHEA:25054"/>
        <dbReference type="ChEBI" id="CHEBI:15378"/>
        <dbReference type="ChEBI" id="CHEBI:15379"/>
        <dbReference type="ChEBI" id="CHEBI:58642"/>
        <dbReference type="ChEBI" id="CHEBI:66888"/>
        <dbReference type="EC" id="1.13.11.16"/>
    </reaction>
</comment>
<comment type="cofactor">
    <cofactor evidence="2">
        <name>Fe(2+)</name>
        <dbReference type="ChEBI" id="CHEBI:29033"/>
    </cofactor>
</comment>
<comment type="biophysicochemical properties">
    <kinetics>
        <KM evidence="2">7.1 uM for 2,3-dihydroxyphenylpropionic acid (at 20 degrees Celsius and pH 8)</KM>
        <KM evidence="2">14 uM for 2,3-dihydroxycinnamic acid (at 20 degrees Celsius and pH 8)</KM>
        <KM evidence="2">59 uM for 3-ethylcatechol (at 20 degrees Celsius and pH 8)</KM>
        <KM evidence="2">130 uM for 3-methylcatechol (at 20 degrees Celsius and pH 8)</KM>
    </kinetics>
</comment>
<comment type="pathway">
    <text>Aromatic compound metabolism; 3-phenylpropanoate degradation.</text>
</comment>
<comment type="subunit">
    <text evidence="1">Homotetramer.</text>
</comment>
<comment type="similarity">
    <text evidence="3">Belongs to the LigB/MhpB extradiol dioxygenase family.</text>
</comment>
<protein>
    <recommendedName>
        <fullName>2,3-dihydroxyphenylpropionate/2,3-dihydroxicinnamic acid 1,2-dioxygenase</fullName>
        <ecNumber>1.13.11.16</ecNumber>
    </recommendedName>
    <alternativeName>
        <fullName>3-carboxyethylcatechol 2,3-dioxygenase</fullName>
    </alternativeName>
</protein>
<proteinExistence type="evidence at protein level"/>
<reference key="1">
    <citation type="journal article" date="1990" name="Nucleic Acids Res.">
        <title>Nucleotide sequence of metapyrocatechase I (catechol 2,3-oxygenase I) gene mpcI from Alcaligenes eutrophus JMP222.</title>
        <authorList>
            <person name="Kabisch M."/>
            <person name="Fortnagel P."/>
        </authorList>
    </citation>
    <scope>NUCLEOTIDE SEQUENCE [GENOMIC DNA]</scope>
    <source>
        <strain>JMP222</strain>
    </source>
</reference>
<reference key="2">
    <citation type="journal article" date="1996" name="J. Bacteriol.">
        <title>Catechol dioxygenases from Escherichia coli (MhpB) and Alcaligenes eutrophus (MpcI): sequence analysis and biochemical properties of a third family of extradiol dioxygenases.</title>
        <authorList>
            <person name="Spence E.L."/>
            <person name="Kawamukai M."/>
            <person name="Sanvoisin J."/>
            <person name="Braven H."/>
            <person name="Bugg T.D.H."/>
        </authorList>
    </citation>
    <scope>FUNCTION IN CATABOLISM OF 3-HYDROXY DERIVATIVES OF PHENYLPROPIONIC ACID</scope>
    <scope>COFACTOR</scope>
    <scope>BIOPHYSICOCHEMICAL PROPERTIES</scope>
</reference>